<organism>
    <name type="scientific">Geobacillus thermodenitrificans (strain NG80-2)</name>
    <dbReference type="NCBI Taxonomy" id="420246"/>
    <lineage>
        <taxon>Bacteria</taxon>
        <taxon>Bacillati</taxon>
        <taxon>Bacillota</taxon>
        <taxon>Bacilli</taxon>
        <taxon>Bacillales</taxon>
        <taxon>Anoxybacillaceae</taxon>
        <taxon>Geobacillus</taxon>
    </lineage>
</organism>
<reference key="1">
    <citation type="journal article" date="2007" name="Proc. Natl. Acad. Sci. U.S.A.">
        <title>Genome and proteome of long-chain alkane degrading Geobacillus thermodenitrificans NG80-2 isolated from a deep-subsurface oil reservoir.</title>
        <authorList>
            <person name="Feng L."/>
            <person name="Wang W."/>
            <person name="Cheng J."/>
            <person name="Ren Y."/>
            <person name="Zhao G."/>
            <person name="Gao C."/>
            <person name="Tang Y."/>
            <person name="Liu X."/>
            <person name="Han W."/>
            <person name="Peng X."/>
            <person name="Liu R."/>
            <person name="Wang L."/>
        </authorList>
    </citation>
    <scope>NUCLEOTIDE SEQUENCE [LARGE SCALE GENOMIC DNA]</scope>
    <source>
        <strain>NG80-2</strain>
    </source>
</reference>
<comment type="function">
    <text evidence="1">NDH-1 shuttles electrons from NADH, via FMN and iron-sulfur (Fe-S) centers, to quinones in the respiratory chain. The immediate electron acceptor for the enzyme in this species is believed to be ubiquinone. Couples the redox reaction to proton translocation (for every two electrons transferred, four hydrogen ions are translocated across the cytoplasmic membrane), and thus conserves the redox energy in a proton gradient. This subunit may bind ubiquinone.</text>
</comment>
<comment type="catalytic activity">
    <reaction evidence="1">
        <text>a quinone + NADH + 5 H(+)(in) = a quinol + NAD(+) + 4 H(+)(out)</text>
        <dbReference type="Rhea" id="RHEA:57888"/>
        <dbReference type="ChEBI" id="CHEBI:15378"/>
        <dbReference type="ChEBI" id="CHEBI:24646"/>
        <dbReference type="ChEBI" id="CHEBI:57540"/>
        <dbReference type="ChEBI" id="CHEBI:57945"/>
        <dbReference type="ChEBI" id="CHEBI:132124"/>
    </reaction>
</comment>
<comment type="subunit">
    <text evidence="1">NDH-1 is composed of 14 different subunits. Subunits NuoA, H, J, K, L, M, N constitute the membrane sector of the complex.</text>
</comment>
<comment type="subcellular location">
    <subcellularLocation>
        <location evidence="1">Cell membrane</location>
        <topology evidence="1">Multi-pass membrane protein</topology>
    </subcellularLocation>
</comment>
<comment type="similarity">
    <text evidence="1">Belongs to the complex I subunit 1 family.</text>
</comment>
<feature type="chain" id="PRO_0000299937" description="NADH-quinone oxidoreductase subunit H">
    <location>
        <begin position="1"/>
        <end position="332"/>
    </location>
</feature>
<feature type="transmembrane region" description="Helical" evidence="1">
    <location>
        <begin position="16"/>
        <end position="36"/>
    </location>
</feature>
<feature type="transmembrane region" description="Helical" evidence="1">
    <location>
        <begin position="87"/>
        <end position="107"/>
    </location>
</feature>
<feature type="transmembrane region" description="Helical" evidence="1">
    <location>
        <begin position="116"/>
        <end position="136"/>
    </location>
</feature>
<feature type="transmembrane region" description="Helical" evidence="1">
    <location>
        <begin position="164"/>
        <end position="184"/>
    </location>
</feature>
<feature type="transmembrane region" description="Helical" evidence="1">
    <location>
        <begin position="190"/>
        <end position="210"/>
    </location>
</feature>
<feature type="transmembrane region" description="Helical" evidence="1">
    <location>
        <begin position="231"/>
        <end position="251"/>
    </location>
</feature>
<feature type="transmembrane region" description="Helical" evidence="1">
    <location>
        <begin position="253"/>
        <end position="273"/>
    </location>
</feature>
<feature type="transmembrane region" description="Helical" evidence="1">
    <location>
        <begin position="277"/>
        <end position="297"/>
    </location>
</feature>
<feature type="transmembrane region" description="Helical" evidence="1">
    <location>
        <begin position="312"/>
        <end position="332"/>
    </location>
</feature>
<evidence type="ECO:0000255" key="1">
    <source>
        <dbReference type="HAMAP-Rule" id="MF_01350"/>
    </source>
</evidence>
<keyword id="KW-1003">Cell membrane</keyword>
<keyword id="KW-0472">Membrane</keyword>
<keyword id="KW-0520">NAD</keyword>
<keyword id="KW-0874">Quinone</keyword>
<keyword id="KW-1278">Translocase</keyword>
<keyword id="KW-0812">Transmembrane</keyword>
<keyword id="KW-1133">Transmembrane helix</keyword>
<keyword id="KW-0830">Ubiquinone</keyword>
<sequence length="332" mass="36559">MEQWLESAPGWTNVAVFFGLGALLLLVVLGFVTYAILAERKVMGFMQGRIGPNQVGGRLGLLQTVADVLKLLLKEDTIPKAADRPLYVLAPIIAFTPSFMVLAALPFTDAFRFADIGVGLLYYIAVSGLTTIGVVTGGWASNNKYALLGGMRAAAQMISYEIPLVMSALGVVLLAGSMNLVDIVTAQDNVWFIFAQPLAFLIFFIAAVAELNRVPFDLPEAESELVSGFHVEYSGFRWAFFMLAEYVYLFAMAALITILFLGGWHPVAFLGWIPGSVWFALKFCAIVYVLIWFRATFPRVRADQLMEFAWKVLLPLSLVNIVLTAVIKSLFF</sequence>
<gene>
    <name evidence="1" type="primary">nuoH</name>
    <name type="ordered locus">GTNG_3298</name>
</gene>
<proteinExistence type="inferred from homology"/>
<protein>
    <recommendedName>
        <fullName evidence="1">NADH-quinone oxidoreductase subunit H</fullName>
        <ecNumber evidence="1">7.1.1.-</ecNumber>
    </recommendedName>
    <alternativeName>
        <fullName evidence="1">NADH dehydrogenase I subunit H</fullName>
    </alternativeName>
    <alternativeName>
        <fullName evidence="1">NDH-1 subunit H</fullName>
    </alternativeName>
</protein>
<accession>A4ITI3</accession>
<name>NUOH_GEOTN</name>
<dbReference type="EC" id="7.1.1.-" evidence="1"/>
<dbReference type="EMBL" id="CP000557">
    <property type="protein sequence ID" value="ABO68637.1"/>
    <property type="molecule type" value="Genomic_DNA"/>
</dbReference>
<dbReference type="SMR" id="A4ITI3"/>
<dbReference type="KEGG" id="gtn:GTNG_3298"/>
<dbReference type="eggNOG" id="COG1005">
    <property type="taxonomic scope" value="Bacteria"/>
</dbReference>
<dbReference type="HOGENOM" id="CLU_015134_0_1_9"/>
<dbReference type="Proteomes" id="UP000001578">
    <property type="component" value="Chromosome"/>
</dbReference>
<dbReference type="GO" id="GO:0005886">
    <property type="term" value="C:plasma membrane"/>
    <property type="evidence" value="ECO:0007669"/>
    <property type="project" value="UniProtKB-SubCell"/>
</dbReference>
<dbReference type="GO" id="GO:0003954">
    <property type="term" value="F:NADH dehydrogenase activity"/>
    <property type="evidence" value="ECO:0007669"/>
    <property type="project" value="TreeGrafter"/>
</dbReference>
<dbReference type="GO" id="GO:0016655">
    <property type="term" value="F:oxidoreductase activity, acting on NAD(P)H, quinone or similar compound as acceptor"/>
    <property type="evidence" value="ECO:0007669"/>
    <property type="project" value="UniProtKB-UniRule"/>
</dbReference>
<dbReference type="GO" id="GO:0048038">
    <property type="term" value="F:quinone binding"/>
    <property type="evidence" value="ECO:0007669"/>
    <property type="project" value="UniProtKB-KW"/>
</dbReference>
<dbReference type="GO" id="GO:0009060">
    <property type="term" value="P:aerobic respiration"/>
    <property type="evidence" value="ECO:0007669"/>
    <property type="project" value="TreeGrafter"/>
</dbReference>
<dbReference type="HAMAP" id="MF_01350">
    <property type="entry name" value="NDH1_NuoH"/>
    <property type="match status" value="1"/>
</dbReference>
<dbReference type="InterPro" id="IPR001694">
    <property type="entry name" value="NADH_UbQ_OxRdtase_su1/FPO"/>
</dbReference>
<dbReference type="InterPro" id="IPR018086">
    <property type="entry name" value="NADH_UbQ_OxRdtase_su1_CS"/>
</dbReference>
<dbReference type="NCBIfam" id="NF004741">
    <property type="entry name" value="PRK06076.1-2"/>
    <property type="match status" value="1"/>
</dbReference>
<dbReference type="PANTHER" id="PTHR11432">
    <property type="entry name" value="NADH DEHYDROGENASE SUBUNIT 1"/>
    <property type="match status" value="1"/>
</dbReference>
<dbReference type="PANTHER" id="PTHR11432:SF3">
    <property type="entry name" value="NADH-UBIQUINONE OXIDOREDUCTASE CHAIN 1"/>
    <property type="match status" value="1"/>
</dbReference>
<dbReference type="Pfam" id="PF00146">
    <property type="entry name" value="NADHdh"/>
    <property type="match status" value="1"/>
</dbReference>
<dbReference type="PROSITE" id="PS00668">
    <property type="entry name" value="COMPLEX1_ND1_2"/>
    <property type="match status" value="1"/>
</dbReference>